<keyword id="KW-0025">Alternative splicing</keyword>
<keyword id="KW-0175">Coiled coil</keyword>
<keyword id="KW-1017">Isopeptide bond</keyword>
<keyword id="KW-0597">Phosphoprotein</keyword>
<keyword id="KW-1267">Proteomics identification</keyword>
<keyword id="KW-1185">Reference proteome</keyword>
<keyword id="KW-0832">Ubl conjugation</keyword>
<reference key="1">
    <citation type="journal article" date="2004" name="Oncogene">
        <title>Suppression subtractive hybridization and expression profiling identifies a unique set of genes overexpressed in non-small-cell lung cancer.</title>
        <authorList>
            <person name="Petroziello J."/>
            <person name="Yamane A."/>
            <person name="Westendorf L."/>
            <person name="Thompson M."/>
            <person name="McDonagh C."/>
            <person name="Cerveny C."/>
            <person name="Law C.-L."/>
            <person name="Wahl A."/>
            <person name="Carter P."/>
        </authorList>
    </citation>
    <scope>NUCLEOTIDE SEQUENCE [MRNA] (ISOFORM 1)</scope>
    <scope>TISSUE SPECIFICITY</scope>
</reference>
<reference key="2">
    <citation type="journal article" date="2004" name="Nat. Genet.">
        <title>Complete sequencing and characterization of 21,243 full-length human cDNAs.</title>
        <authorList>
            <person name="Ota T."/>
            <person name="Suzuki Y."/>
            <person name="Nishikawa T."/>
            <person name="Otsuki T."/>
            <person name="Sugiyama T."/>
            <person name="Irie R."/>
            <person name="Wakamatsu A."/>
            <person name="Hayashi K."/>
            <person name="Sato H."/>
            <person name="Nagai K."/>
            <person name="Kimura K."/>
            <person name="Makita H."/>
            <person name="Sekine M."/>
            <person name="Obayashi M."/>
            <person name="Nishi T."/>
            <person name="Shibahara T."/>
            <person name="Tanaka T."/>
            <person name="Ishii S."/>
            <person name="Yamamoto J."/>
            <person name="Saito K."/>
            <person name="Kawai Y."/>
            <person name="Isono Y."/>
            <person name="Nakamura Y."/>
            <person name="Nagahari K."/>
            <person name="Murakami K."/>
            <person name="Yasuda T."/>
            <person name="Iwayanagi T."/>
            <person name="Wagatsuma M."/>
            <person name="Shiratori A."/>
            <person name="Sudo H."/>
            <person name="Hosoiri T."/>
            <person name="Kaku Y."/>
            <person name="Kodaira H."/>
            <person name="Kondo H."/>
            <person name="Sugawara M."/>
            <person name="Takahashi M."/>
            <person name="Kanda K."/>
            <person name="Yokoi T."/>
            <person name="Furuya T."/>
            <person name="Kikkawa E."/>
            <person name="Omura Y."/>
            <person name="Abe K."/>
            <person name="Kamihara K."/>
            <person name="Katsuta N."/>
            <person name="Sato K."/>
            <person name="Tanikawa M."/>
            <person name="Yamazaki M."/>
            <person name="Ninomiya K."/>
            <person name="Ishibashi T."/>
            <person name="Yamashita H."/>
            <person name="Murakawa K."/>
            <person name="Fujimori K."/>
            <person name="Tanai H."/>
            <person name="Kimata M."/>
            <person name="Watanabe M."/>
            <person name="Hiraoka S."/>
            <person name="Chiba Y."/>
            <person name="Ishida S."/>
            <person name="Ono Y."/>
            <person name="Takiguchi S."/>
            <person name="Watanabe S."/>
            <person name="Yosida M."/>
            <person name="Hotuta T."/>
            <person name="Kusano J."/>
            <person name="Kanehori K."/>
            <person name="Takahashi-Fujii A."/>
            <person name="Hara H."/>
            <person name="Tanase T.-O."/>
            <person name="Nomura Y."/>
            <person name="Togiya S."/>
            <person name="Komai F."/>
            <person name="Hara R."/>
            <person name="Takeuchi K."/>
            <person name="Arita M."/>
            <person name="Imose N."/>
            <person name="Musashino K."/>
            <person name="Yuuki H."/>
            <person name="Oshima A."/>
            <person name="Sasaki N."/>
            <person name="Aotsuka S."/>
            <person name="Yoshikawa Y."/>
            <person name="Matsunawa H."/>
            <person name="Ichihara T."/>
            <person name="Shiohata N."/>
            <person name="Sano S."/>
            <person name="Moriya S."/>
            <person name="Momiyama H."/>
            <person name="Satoh N."/>
            <person name="Takami S."/>
            <person name="Terashima Y."/>
            <person name="Suzuki O."/>
            <person name="Nakagawa S."/>
            <person name="Senoh A."/>
            <person name="Mizoguchi H."/>
            <person name="Goto Y."/>
            <person name="Shimizu F."/>
            <person name="Wakebe H."/>
            <person name="Hishigaki H."/>
            <person name="Watanabe T."/>
            <person name="Sugiyama A."/>
            <person name="Takemoto M."/>
            <person name="Kawakami B."/>
            <person name="Yamazaki M."/>
            <person name="Watanabe K."/>
            <person name="Kumagai A."/>
            <person name="Itakura S."/>
            <person name="Fukuzumi Y."/>
            <person name="Fujimori Y."/>
            <person name="Komiyama M."/>
            <person name="Tashiro H."/>
            <person name="Tanigami A."/>
            <person name="Fujiwara T."/>
            <person name="Ono T."/>
            <person name="Yamada K."/>
            <person name="Fujii Y."/>
            <person name="Ozaki K."/>
            <person name="Hirao M."/>
            <person name="Ohmori Y."/>
            <person name="Kawabata A."/>
            <person name="Hikiji T."/>
            <person name="Kobatake N."/>
            <person name="Inagaki H."/>
            <person name="Ikema Y."/>
            <person name="Okamoto S."/>
            <person name="Okitani R."/>
            <person name="Kawakami T."/>
            <person name="Noguchi S."/>
            <person name="Itoh T."/>
            <person name="Shigeta K."/>
            <person name="Senba T."/>
            <person name="Matsumura K."/>
            <person name="Nakajima Y."/>
            <person name="Mizuno T."/>
            <person name="Morinaga M."/>
            <person name="Sasaki M."/>
            <person name="Togashi T."/>
            <person name="Oyama M."/>
            <person name="Hata H."/>
            <person name="Watanabe M."/>
            <person name="Komatsu T."/>
            <person name="Mizushima-Sugano J."/>
            <person name="Satoh T."/>
            <person name="Shirai Y."/>
            <person name="Takahashi Y."/>
            <person name="Nakagawa K."/>
            <person name="Okumura K."/>
            <person name="Nagase T."/>
            <person name="Nomura N."/>
            <person name="Kikuchi H."/>
            <person name="Masuho Y."/>
            <person name="Yamashita R."/>
            <person name="Nakai K."/>
            <person name="Yada T."/>
            <person name="Nakamura Y."/>
            <person name="Ohara O."/>
            <person name="Isogai T."/>
            <person name="Sugano S."/>
        </authorList>
    </citation>
    <scope>NUCLEOTIDE SEQUENCE [LARGE SCALE MRNA] (ISOFORM 1)</scope>
    <source>
        <tissue>Subthalamic nucleus</tissue>
    </source>
</reference>
<reference key="3">
    <citation type="journal article" date="2004" name="Nature">
        <title>DNA sequence and analysis of human chromosome 9.</title>
        <authorList>
            <person name="Humphray S.J."/>
            <person name="Oliver K."/>
            <person name="Hunt A.R."/>
            <person name="Plumb R.W."/>
            <person name="Loveland J.E."/>
            <person name="Howe K.L."/>
            <person name="Andrews T.D."/>
            <person name="Searle S."/>
            <person name="Hunt S.E."/>
            <person name="Scott C.E."/>
            <person name="Jones M.C."/>
            <person name="Ainscough R."/>
            <person name="Almeida J.P."/>
            <person name="Ambrose K.D."/>
            <person name="Ashwell R.I.S."/>
            <person name="Babbage A.K."/>
            <person name="Babbage S."/>
            <person name="Bagguley C.L."/>
            <person name="Bailey J."/>
            <person name="Banerjee R."/>
            <person name="Barker D.J."/>
            <person name="Barlow K.F."/>
            <person name="Bates K."/>
            <person name="Beasley H."/>
            <person name="Beasley O."/>
            <person name="Bird C.P."/>
            <person name="Bray-Allen S."/>
            <person name="Brown A.J."/>
            <person name="Brown J.Y."/>
            <person name="Burford D."/>
            <person name="Burrill W."/>
            <person name="Burton J."/>
            <person name="Carder C."/>
            <person name="Carter N.P."/>
            <person name="Chapman J.C."/>
            <person name="Chen Y."/>
            <person name="Clarke G."/>
            <person name="Clark S.Y."/>
            <person name="Clee C.M."/>
            <person name="Clegg S."/>
            <person name="Collier R.E."/>
            <person name="Corby N."/>
            <person name="Crosier M."/>
            <person name="Cummings A.T."/>
            <person name="Davies J."/>
            <person name="Dhami P."/>
            <person name="Dunn M."/>
            <person name="Dutta I."/>
            <person name="Dyer L.W."/>
            <person name="Earthrowl M.E."/>
            <person name="Faulkner L."/>
            <person name="Fleming C.J."/>
            <person name="Frankish A."/>
            <person name="Frankland J.A."/>
            <person name="French L."/>
            <person name="Fricker D.G."/>
            <person name="Garner P."/>
            <person name="Garnett J."/>
            <person name="Ghori J."/>
            <person name="Gilbert J.G.R."/>
            <person name="Glison C."/>
            <person name="Grafham D.V."/>
            <person name="Gribble S."/>
            <person name="Griffiths C."/>
            <person name="Griffiths-Jones S."/>
            <person name="Grocock R."/>
            <person name="Guy J."/>
            <person name="Hall R.E."/>
            <person name="Hammond S."/>
            <person name="Harley J.L."/>
            <person name="Harrison E.S.I."/>
            <person name="Hart E.A."/>
            <person name="Heath P.D."/>
            <person name="Henderson C.D."/>
            <person name="Hopkins B.L."/>
            <person name="Howard P.J."/>
            <person name="Howden P.J."/>
            <person name="Huckle E."/>
            <person name="Johnson C."/>
            <person name="Johnson D."/>
            <person name="Joy A.A."/>
            <person name="Kay M."/>
            <person name="Keenan S."/>
            <person name="Kershaw J.K."/>
            <person name="Kimberley A.M."/>
            <person name="King A."/>
            <person name="Knights A."/>
            <person name="Laird G.K."/>
            <person name="Langford C."/>
            <person name="Lawlor S."/>
            <person name="Leongamornlert D.A."/>
            <person name="Leversha M."/>
            <person name="Lloyd C."/>
            <person name="Lloyd D.M."/>
            <person name="Lovell J."/>
            <person name="Martin S."/>
            <person name="Mashreghi-Mohammadi M."/>
            <person name="Matthews L."/>
            <person name="McLaren S."/>
            <person name="McLay K.E."/>
            <person name="McMurray A."/>
            <person name="Milne S."/>
            <person name="Nickerson T."/>
            <person name="Nisbett J."/>
            <person name="Nordsiek G."/>
            <person name="Pearce A.V."/>
            <person name="Peck A.I."/>
            <person name="Porter K.M."/>
            <person name="Pandian R."/>
            <person name="Pelan S."/>
            <person name="Phillimore B."/>
            <person name="Povey S."/>
            <person name="Ramsey Y."/>
            <person name="Rand V."/>
            <person name="Scharfe M."/>
            <person name="Sehra H.K."/>
            <person name="Shownkeen R."/>
            <person name="Sims S.K."/>
            <person name="Skuce C.D."/>
            <person name="Smith M."/>
            <person name="Steward C.A."/>
            <person name="Swarbreck D."/>
            <person name="Sycamore N."/>
            <person name="Tester J."/>
            <person name="Thorpe A."/>
            <person name="Tracey A."/>
            <person name="Tromans A."/>
            <person name="Thomas D.W."/>
            <person name="Wall M."/>
            <person name="Wallis J.M."/>
            <person name="West A.P."/>
            <person name="Whitehead S.L."/>
            <person name="Willey D.L."/>
            <person name="Williams S.A."/>
            <person name="Wilming L."/>
            <person name="Wray P.W."/>
            <person name="Young L."/>
            <person name="Ashurst J.L."/>
            <person name="Coulson A."/>
            <person name="Blocker H."/>
            <person name="Durbin R.M."/>
            <person name="Sulston J.E."/>
            <person name="Hubbard T."/>
            <person name="Jackson M.J."/>
            <person name="Bentley D.R."/>
            <person name="Beck S."/>
            <person name="Rogers J."/>
            <person name="Dunham I."/>
        </authorList>
    </citation>
    <scope>NUCLEOTIDE SEQUENCE [LARGE SCALE GENOMIC DNA]</scope>
</reference>
<reference key="4">
    <citation type="journal article" date="2004" name="Genome Res.">
        <title>The status, quality, and expansion of the NIH full-length cDNA project: the Mammalian Gene Collection (MGC).</title>
        <authorList>
            <consortium name="The MGC Project Team"/>
        </authorList>
    </citation>
    <scope>NUCLEOTIDE SEQUENCE [LARGE SCALE MRNA] (ISOFORM 1)</scope>
    <source>
        <tissue>Brain</tissue>
    </source>
</reference>
<reference key="5">
    <citation type="journal article" date="2006" name="Cell">
        <title>Global, in vivo, and site-specific phosphorylation dynamics in signaling networks.</title>
        <authorList>
            <person name="Olsen J.V."/>
            <person name="Blagoev B."/>
            <person name="Gnad F."/>
            <person name="Macek B."/>
            <person name="Kumar C."/>
            <person name="Mortensen P."/>
            <person name="Mann M."/>
        </authorList>
    </citation>
    <scope>IDENTIFICATION BY MASS SPECTROMETRY [LARGE SCALE ANALYSIS]</scope>
    <source>
        <tissue>Cervix carcinoma</tissue>
    </source>
</reference>
<reference key="6">
    <citation type="journal article" date="2008" name="Proc. Natl. Acad. Sci. U.S.A.">
        <title>A quantitative atlas of mitotic phosphorylation.</title>
        <authorList>
            <person name="Dephoure N."/>
            <person name="Zhou C."/>
            <person name="Villen J."/>
            <person name="Beausoleil S.A."/>
            <person name="Bakalarski C.E."/>
            <person name="Elledge S.J."/>
            <person name="Gygi S.P."/>
        </authorList>
    </citation>
    <scope>PHOSPHORYLATION [LARGE SCALE ANALYSIS] AT SER-98 AND SER-274</scope>
    <scope>IDENTIFICATION BY MASS SPECTROMETRY [LARGE SCALE ANALYSIS]</scope>
    <source>
        <tissue>Cervix carcinoma</tissue>
    </source>
</reference>
<reference key="7">
    <citation type="journal article" date="2010" name="Sci. Signal.">
        <title>Quantitative phosphoproteomics reveals widespread full phosphorylation site occupancy during mitosis.</title>
        <authorList>
            <person name="Olsen J.V."/>
            <person name="Vermeulen M."/>
            <person name="Santamaria A."/>
            <person name="Kumar C."/>
            <person name="Miller M.L."/>
            <person name="Jensen L.J."/>
            <person name="Gnad F."/>
            <person name="Cox J."/>
            <person name="Jensen T.S."/>
            <person name="Nigg E.A."/>
            <person name="Brunak S."/>
            <person name="Mann M."/>
        </authorList>
    </citation>
    <scope>PHOSPHORYLATION [LARGE SCALE ANALYSIS] AT SER-96; SER-98 AND SER-274</scope>
    <scope>IDENTIFICATION BY MASS SPECTROMETRY [LARGE SCALE ANALYSIS]</scope>
    <source>
        <tissue>Cervix carcinoma</tissue>
    </source>
</reference>
<reference key="8">
    <citation type="journal article" date="2011" name="Sci. Signal.">
        <title>System-wide temporal characterization of the proteome and phosphoproteome of human embryonic stem cell differentiation.</title>
        <authorList>
            <person name="Rigbolt K.T."/>
            <person name="Prokhorova T.A."/>
            <person name="Akimov V."/>
            <person name="Henningsen J."/>
            <person name="Johansen P.T."/>
            <person name="Kratchmarova I."/>
            <person name="Kassem M."/>
            <person name="Mann M."/>
            <person name="Olsen J.V."/>
            <person name="Blagoev B."/>
        </authorList>
    </citation>
    <scope>IDENTIFICATION BY MASS SPECTROMETRY [LARGE SCALE ANALYSIS]</scope>
</reference>
<reference key="9">
    <citation type="journal article" date="2013" name="J. Proteome Res.">
        <title>Toward a comprehensive characterization of a human cancer cell phosphoproteome.</title>
        <authorList>
            <person name="Zhou H."/>
            <person name="Di Palma S."/>
            <person name="Preisinger C."/>
            <person name="Peng M."/>
            <person name="Polat A.N."/>
            <person name="Heck A.J."/>
            <person name="Mohammed S."/>
        </authorList>
    </citation>
    <scope>PHOSPHORYLATION [LARGE SCALE ANALYSIS] AT SER-98</scope>
    <scope>IDENTIFICATION BY MASS SPECTROMETRY [LARGE SCALE ANALYSIS]</scope>
    <source>
        <tissue>Cervix carcinoma</tissue>
        <tissue>Erythroleukemia</tissue>
    </source>
</reference>
<reference key="10">
    <citation type="journal article" date="2017" name="Nat. Struct. Mol. Biol.">
        <title>Site-specific mapping of the human SUMO proteome reveals co-modification with phosphorylation.</title>
        <authorList>
            <person name="Hendriks I.A."/>
            <person name="Lyon D."/>
            <person name="Young C."/>
            <person name="Jensen L.J."/>
            <person name="Vertegaal A.C."/>
            <person name="Nielsen M.L."/>
        </authorList>
    </citation>
    <scope>SUMOYLATION [LARGE SCALE ANALYSIS] AT LYS-154</scope>
    <scope>IDENTIFICATION BY MASS SPECTROMETRY [LARGE SCALE ANALYSIS]</scope>
</reference>
<protein>
    <recommendedName>
        <fullName>Myb/SANT-like DNA-binding domain-containing protein 3</fullName>
    </recommendedName>
</protein>
<dbReference type="EMBL" id="AY598327">
    <property type="protein sequence ID" value="AAT06738.1"/>
    <property type="molecule type" value="mRNA"/>
</dbReference>
<dbReference type="EMBL" id="AK314924">
    <property type="protein sequence ID" value="BAG37432.1"/>
    <property type="molecule type" value="mRNA"/>
</dbReference>
<dbReference type="EMBL" id="AL353805">
    <property type="status" value="NOT_ANNOTATED_CDS"/>
    <property type="molecule type" value="Genomic_DNA"/>
</dbReference>
<dbReference type="EMBL" id="BC008993">
    <property type="protein sequence ID" value="AAH08993.1"/>
    <property type="molecule type" value="mRNA"/>
</dbReference>
<dbReference type="CCDS" id="CCDS56579.1">
    <molecule id="Q96H12-2"/>
</dbReference>
<dbReference type="CCDS" id="CCDS6749.1">
    <molecule id="Q96H12-1"/>
</dbReference>
<dbReference type="RefSeq" id="NP_001185734.1">
    <molecule id="Q96H12-1"/>
    <property type="nucleotide sequence ID" value="NM_001198805.2"/>
</dbReference>
<dbReference type="RefSeq" id="NP_001185735.1">
    <molecule id="Q96H12-1"/>
    <property type="nucleotide sequence ID" value="NM_001198806.2"/>
</dbReference>
<dbReference type="RefSeq" id="NP_001185736.1">
    <molecule id="Q96H12-2"/>
    <property type="nucleotide sequence ID" value="NM_001198807.2"/>
</dbReference>
<dbReference type="RefSeq" id="NP_542386.1">
    <molecule id="Q96H12-1"/>
    <property type="nucleotide sequence ID" value="NM_080655.3"/>
</dbReference>
<dbReference type="SMR" id="Q96H12"/>
<dbReference type="BioGRID" id="124810">
    <property type="interactions" value="22"/>
</dbReference>
<dbReference type="FunCoup" id="Q96H12">
    <property type="interactions" value="89"/>
</dbReference>
<dbReference type="IntAct" id="Q96H12">
    <property type="interactions" value="24"/>
</dbReference>
<dbReference type="MINT" id="Q96H12"/>
<dbReference type="STRING" id="9606.ENSP00000480445"/>
<dbReference type="GlyGen" id="Q96H12">
    <property type="glycosylation" value="1 site, 1 O-linked glycan (1 site)"/>
</dbReference>
<dbReference type="iPTMnet" id="Q96H12"/>
<dbReference type="PhosphoSitePlus" id="Q96H12"/>
<dbReference type="BioMuta" id="MSANTD3"/>
<dbReference type="DMDM" id="74751897"/>
<dbReference type="jPOST" id="Q96H12"/>
<dbReference type="MassIVE" id="Q96H12"/>
<dbReference type="PaxDb" id="9606-ENSP00000480445"/>
<dbReference type="PeptideAtlas" id="Q96H12"/>
<dbReference type="ProteomicsDB" id="76693">
    <molecule id="Q96H12-1"/>
</dbReference>
<dbReference type="Antibodypedia" id="34901">
    <property type="antibodies" value="73 antibodies from 12 providers"/>
</dbReference>
<dbReference type="DNASU" id="91283"/>
<dbReference type="Ensembl" id="ENST00000374885.5">
    <molecule id="Q96H12-2"/>
    <property type="protein sequence ID" value="ENSP00000364020.1"/>
    <property type="gene ID" value="ENSG00000066697.15"/>
</dbReference>
<dbReference type="Ensembl" id="ENST00000395067.7">
    <molecule id="Q96H12-1"/>
    <property type="protein sequence ID" value="ENSP00000378506.2"/>
    <property type="gene ID" value="ENSG00000066697.15"/>
</dbReference>
<dbReference type="Ensembl" id="ENST00000613183.1">
    <molecule id="Q96H12-1"/>
    <property type="protein sequence ID" value="ENSP00000480445.1"/>
    <property type="gene ID" value="ENSG00000066697.15"/>
</dbReference>
<dbReference type="Ensembl" id="ENST00000622639.4">
    <molecule id="Q96H12-1"/>
    <property type="protein sequence ID" value="ENSP00000480622.1"/>
    <property type="gene ID" value="ENSG00000066697.15"/>
</dbReference>
<dbReference type="GeneID" id="91283"/>
<dbReference type="KEGG" id="hsa:91283"/>
<dbReference type="MANE-Select" id="ENST00000395067.7">
    <property type="protein sequence ID" value="ENSP00000378506.2"/>
    <property type="RefSeq nucleotide sequence ID" value="NM_080655.3"/>
    <property type="RefSeq protein sequence ID" value="NP_542386.1"/>
</dbReference>
<dbReference type="UCSC" id="uc004baw.4">
    <molecule id="Q96H12-1"/>
    <property type="organism name" value="human"/>
</dbReference>
<dbReference type="AGR" id="HGNC:23370"/>
<dbReference type="CTD" id="91283"/>
<dbReference type="DisGeNET" id="91283"/>
<dbReference type="GeneCards" id="MSANTD3"/>
<dbReference type="HGNC" id="HGNC:23370">
    <property type="gene designation" value="MSANTD3"/>
</dbReference>
<dbReference type="HPA" id="ENSG00000066697">
    <property type="expression patterns" value="Low tissue specificity"/>
</dbReference>
<dbReference type="neXtProt" id="NX_Q96H12"/>
<dbReference type="OpenTargets" id="ENSG00000066697"/>
<dbReference type="PharmGKB" id="PA142672311"/>
<dbReference type="VEuPathDB" id="HostDB:ENSG00000066697"/>
<dbReference type="eggNOG" id="ENOG502RFDD">
    <property type="taxonomic scope" value="Eukaryota"/>
</dbReference>
<dbReference type="GeneTree" id="ENSGT00390000007901"/>
<dbReference type="HOGENOM" id="CLU_065066_0_0_1"/>
<dbReference type="InParanoid" id="Q96H12"/>
<dbReference type="OMA" id="QTVAKEW"/>
<dbReference type="OrthoDB" id="3066195at2759"/>
<dbReference type="PAN-GO" id="Q96H12">
    <property type="GO annotations" value="0 GO annotations based on evolutionary models"/>
</dbReference>
<dbReference type="PhylomeDB" id="Q96H12"/>
<dbReference type="TreeFam" id="TF328595"/>
<dbReference type="PathwayCommons" id="Q96H12"/>
<dbReference type="SignaLink" id="Q96H12"/>
<dbReference type="BioGRID-ORCS" id="91283">
    <property type="hits" value="17 hits in 1154 CRISPR screens"/>
</dbReference>
<dbReference type="ChiTaRS" id="MSANTD3">
    <property type="organism name" value="human"/>
</dbReference>
<dbReference type="GenomeRNAi" id="91283"/>
<dbReference type="Pharos" id="Q96H12">
    <property type="development level" value="Tdark"/>
</dbReference>
<dbReference type="PRO" id="PR:Q96H12"/>
<dbReference type="Proteomes" id="UP000005640">
    <property type="component" value="Chromosome 9"/>
</dbReference>
<dbReference type="RNAct" id="Q96H12">
    <property type="molecule type" value="protein"/>
</dbReference>
<dbReference type="Bgee" id="ENSG00000066697">
    <property type="expression patterns" value="Expressed in cartilage tissue and 182 other cell types or tissues"/>
</dbReference>
<dbReference type="ExpressionAtlas" id="Q96H12">
    <property type="expression patterns" value="baseline and differential"/>
</dbReference>
<dbReference type="InterPro" id="IPR028002">
    <property type="entry name" value="Myb_DNA-bind_5"/>
</dbReference>
<dbReference type="PANTHER" id="PTHR21632">
    <property type="entry name" value="REGULATORY PROTEIN ZESTE"/>
    <property type="match status" value="1"/>
</dbReference>
<dbReference type="PANTHER" id="PTHR21632:SF4">
    <property type="entry name" value="REGULATORY PROTEIN ZESTE"/>
    <property type="match status" value="1"/>
</dbReference>
<dbReference type="Pfam" id="PF13873">
    <property type="entry name" value="Myb_DNA-bind_5"/>
    <property type="match status" value="1"/>
</dbReference>
<accession>Q96H12</accession>
<accession>B2RC35</accession>
<accession>Q5T726</accession>
<accession>Q5T727</accession>
<accession>Q5T728</accession>
<feature type="chain" id="PRO_0000292590" description="Myb/SANT-like DNA-binding domain-containing protein 3">
    <location>
        <begin position="1"/>
        <end position="275"/>
    </location>
</feature>
<feature type="domain" description="Myb-like">
    <location>
        <begin position="13"/>
        <end position="78"/>
    </location>
</feature>
<feature type="coiled-coil region" evidence="1">
    <location>
        <begin position="211"/>
        <end position="247"/>
    </location>
</feature>
<feature type="modified residue" description="Phosphoserine" evidence="5">
    <location>
        <position position="96"/>
    </location>
</feature>
<feature type="modified residue" description="Phosphoserine" evidence="4 5 6">
    <location>
        <position position="98"/>
    </location>
</feature>
<feature type="modified residue" description="Phosphoserine" evidence="4 5">
    <location>
        <position position="274"/>
    </location>
</feature>
<feature type="cross-link" description="Glycyl lysine isopeptide (Lys-Gly) (interchain with G-Cter in SUMO2)" evidence="7">
    <location>
        <position position="154"/>
    </location>
</feature>
<feature type="splice variant" id="VSP_053346" description="In isoform 2." evidence="3">
    <original>ESFAVSNRELCDDEKEFIHF</original>
    <variation>VFFQERKRSLELSIILSGTW</variation>
    <location>
        <begin position="140"/>
        <end position="159"/>
    </location>
</feature>
<feature type="splice variant" id="VSP_053347" description="In isoform 2." evidence="3">
    <location>
        <begin position="160"/>
        <end position="275"/>
    </location>
</feature>
<organism>
    <name type="scientific">Homo sapiens</name>
    <name type="common">Human</name>
    <dbReference type="NCBI Taxonomy" id="9606"/>
    <lineage>
        <taxon>Eukaryota</taxon>
        <taxon>Metazoa</taxon>
        <taxon>Chordata</taxon>
        <taxon>Craniata</taxon>
        <taxon>Vertebrata</taxon>
        <taxon>Euteleostomi</taxon>
        <taxon>Mammalia</taxon>
        <taxon>Eutheria</taxon>
        <taxon>Euarchontoglires</taxon>
        <taxon>Primates</taxon>
        <taxon>Haplorrhini</taxon>
        <taxon>Catarrhini</taxon>
        <taxon>Hominidae</taxon>
        <taxon>Homo</taxon>
    </lineage>
</organism>
<proteinExistence type="evidence at protein level"/>
<name>MSD3_HUMAN</name>
<sequence length="275" mass="32363">MQNNEIIKPAKYFSELEKSILLALVEKYKYVLECKKSDARTIALKQRTWQALAHEYNSQPSVSLRDFKQLKKCWENIKARTKKIMAHERREKVKRSVSPLLSTHVLGKEKIASMLPEQLYFLQSPPEEEPEYHPDASAQESFAVSNRELCDDEKEFIHFPVCEGTSQPEPSCSAVRITANKNYRSKTSQEGALKKMHEEEHHQQMSILQLQLIQMNEVHVAKIQQIERECEMAEEEHRIKMEVLNKKKMYWERKLQTFTKEWPVSSFNRPFPNSP</sequence>
<gene>
    <name type="primary">MSANTD3</name>
    <name type="synonym">C9orf30</name>
    <name type="ORF">L8</name>
</gene>
<evidence type="ECO:0000255" key="1"/>
<evidence type="ECO:0000269" key="2">
    <source>
    </source>
</evidence>
<evidence type="ECO:0000305" key="3"/>
<evidence type="ECO:0007744" key="4">
    <source>
    </source>
</evidence>
<evidence type="ECO:0007744" key="5">
    <source>
    </source>
</evidence>
<evidence type="ECO:0007744" key="6">
    <source>
    </source>
</evidence>
<evidence type="ECO:0007744" key="7">
    <source>
    </source>
</evidence>
<comment type="interaction">
    <interactant intactId="EBI-8466227">
        <id>Q96H12</id>
    </interactant>
    <interactant intactId="EBI-25837549">
        <id>P28329-3</id>
        <label>CHAT</label>
    </interactant>
    <organismsDiffer>false</organismsDiffer>
    <experiments>3</experiments>
</comment>
<comment type="interaction">
    <interactant intactId="EBI-8466227">
        <id>Q96H12</id>
    </interactant>
    <interactant intactId="EBI-348399">
        <id>P22607</id>
        <label>FGFR3</label>
    </interactant>
    <organismsDiffer>false</organismsDiffer>
    <experiments>3</experiments>
</comment>
<comment type="interaction">
    <interactant intactId="EBI-8466227">
        <id>Q96H12</id>
    </interactant>
    <interactant intactId="EBI-8285963">
        <id>Q14957</id>
        <label>GRIN2C</label>
    </interactant>
    <organismsDiffer>false</organismsDiffer>
    <experiments>3</experiments>
</comment>
<comment type="interaction">
    <interactant intactId="EBI-8466227">
        <id>Q96H12</id>
    </interactant>
    <interactant intactId="EBI-351506">
        <id>P06396</id>
        <label>GSN</label>
    </interactant>
    <organismsDiffer>false</organismsDiffer>
    <experiments>3</experiments>
</comment>
<comment type="interaction">
    <interactant intactId="EBI-8466227">
        <id>Q96H12</id>
    </interactant>
    <interactant intactId="EBI-25900580">
        <id>Q9Y649</id>
    </interactant>
    <organismsDiffer>false</organismsDiffer>
    <experiments>3</experiments>
</comment>
<comment type="alternative products">
    <event type="alternative splicing"/>
    <isoform>
        <id>Q96H12-1</id>
        <name>1</name>
        <sequence type="displayed"/>
    </isoform>
    <isoform>
        <id>Q96H12-2</id>
        <name>2</name>
        <sequence type="described" ref="VSP_053346 VSP_053347"/>
    </isoform>
</comment>
<comment type="tissue specificity">
    <text evidence="2">Expressed in brain.</text>
</comment>
<comment type="similarity">
    <text evidence="3">Belongs to the MSANTD3 family.</text>
</comment>